<keyword id="KW-0002">3D-structure</keyword>
<keyword id="KW-0025">Alternative splicing</keyword>
<keyword id="KW-0175">Coiled coil</keyword>
<keyword id="KW-0227">DNA damage</keyword>
<keyword id="KW-0233">DNA recombination</keyword>
<keyword id="KW-0234">DNA repair</keyword>
<keyword id="KW-0238">DNA-binding</keyword>
<keyword id="KW-0539">Nucleus</keyword>
<keyword id="KW-0597">Phosphoprotein</keyword>
<keyword id="KW-1185">Reference proteome</keyword>
<keyword id="KW-0677">Repeat</keyword>
<keyword id="KW-0043">Tumor suppressor</keyword>
<keyword id="KW-0853">WD repeat</keyword>
<accession>Q3U0P1</accession>
<accession>Q6NZG9</accession>
<accession>Q7TMQ4</accession>
<accession>Q8CEA9</accession>
<dbReference type="EMBL" id="AK028653">
    <property type="protein sequence ID" value="BAC26048.1"/>
    <property type="molecule type" value="mRNA"/>
</dbReference>
<dbReference type="EMBL" id="AK156701">
    <property type="protein sequence ID" value="BAE33811.1"/>
    <property type="molecule type" value="mRNA"/>
</dbReference>
<dbReference type="EMBL" id="BC055302">
    <property type="protein sequence ID" value="AAH55302.1"/>
    <property type="molecule type" value="mRNA"/>
</dbReference>
<dbReference type="EMBL" id="BC066140">
    <property type="protein sequence ID" value="AAH66140.1"/>
    <property type="molecule type" value="mRNA"/>
</dbReference>
<dbReference type="CCDS" id="CCDS40117.1">
    <molecule id="Q3U0P1-1"/>
</dbReference>
<dbReference type="CCDS" id="CCDS72035.1">
    <molecule id="Q3U0P1-2"/>
</dbReference>
<dbReference type="CCDS" id="CCDS80796.1">
    <molecule id="Q3U0P1-3"/>
</dbReference>
<dbReference type="RefSeq" id="NP_001074707.1">
    <molecule id="Q3U0P1-1"/>
    <property type="nucleotide sequence ID" value="NM_001081238.2"/>
</dbReference>
<dbReference type="RefSeq" id="NP_001276771.1">
    <property type="nucleotide sequence ID" value="NM_001289842.1"/>
</dbReference>
<dbReference type="RefSeq" id="NP_001276772.1">
    <property type="nucleotide sequence ID" value="NM_001289843.1"/>
</dbReference>
<dbReference type="RefSeq" id="NP_001276773.1">
    <molecule id="Q3U0P1-2"/>
    <property type="nucleotide sequence ID" value="NM_001289844.1"/>
</dbReference>
<dbReference type="RefSeq" id="NP_001276774.1">
    <molecule id="Q3U0P1-3"/>
    <property type="nucleotide sequence ID" value="NM_001289845.1"/>
</dbReference>
<dbReference type="PDB" id="6E4H">
    <property type="method" value="NMR"/>
    <property type="chains" value="A/B=1-60"/>
</dbReference>
<dbReference type="PDB" id="7K3S">
    <property type="method" value="NMR"/>
    <property type="chains" value="B=1-60"/>
</dbReference>
<dbReference type="PDBsum" id="6E4H"/>
<dbReference type="PDBsum" id="7K3S"/>
<dbReference type="SMR" id="Q3U0P1"/>
<dbReference type="BioGRID" id="231454">
    <property type="interactions" value="13"/>
</dbReference>
<dbReference type="FunCoup" id="Q3U0P1">
    <property type="interactions" value="2267"/>
</dbReference>
<dbReference type="IntAct" id="Q3U0P1">
    <property type="interactions" value="1"/>
</dbReference>
<dbReference type="MINT" id="Q3U0P1"/>
<dbReference type="STRING" id="10090.ENSMUSP00000095675"/>
<dbReference type="iPTMnet" id="Q3U0P1"/>
<dbReference type="PhosphoSitePlus" id="Q3U0P1"/>
<dbReference type="PaxDb" id="10090-ENSMUSP00000095675"/>
<dbReference type="ProteomicsDB" id="295454">
    <molecule id="Q3U0P1-1"/>
</dbReference>
<dbReference type="ProteomicsDB" id="295455">
    <molecule id="Q3U0P1-2"/>
</dbReference>
<dbReference type="ProteomicsDB" id="295456">
    <molecule id="Q3U0P1-3"/>
</dbReference>
<dbReference type="ProteomicsDB" id="295457">
    <molecule id="Q3U0P1-4"/>
</dbReference>
<dbReference type="Antibodypedia" id="26008">
    <property type="antibodies" value="248 antibodies from 36 providers"/>
</dbReference>
<dbReference type="DNASU" id="233826"/>
<dbReference type="Ensembl" id="ENSMUST00000063587.13">
    <molecule id="Q3U0P1-3"/>
    <property type="protein sequence ID" value="ENSMUSP00000063514.7"/>
    <property type="gene ID" value="ENSMUSG00000044702.14"/>
</dbReference>
<dbReference type="Ensembl" id="ENSMUST00000098068.10">
    <molecule id="Q3U0P1-1"/>
    <property type="protein sequence ID" value="ENSMUSP00000095675.4"/>
    <property type="gene ID" value="ENSMUSG00000044702.14"/>
</dbReference>
<dbReference type="Ensembl" id="ENSMUST00000106469.8">
    <molecule id="Q3U0P1-2"/>
    <property type="protein sequence ID" value="ENSMUSP00000102077.2"/>
    <property type="gene ID" value="ENSMUSG00000044702.14"/>
</dbReference>
<dbReference type="GeneID" id="233826"/>
<dbReference type="KEGG" id="mmu:233826"/>
<dbReference type="UCSC" id="uc009joj.2">
    <molecule id="Q3U0P1-1"/>
    <property type="organism name" value="mouse"/>
</dbReference>
<dbReference type="UCSC" id="uc009jom.1">
    <molecule id="Q3U0P1-4"/>
    <property type="organism name" value="mouse"/>
</dbReference>
<dbReference type="UCSC" id="uc012ftg.2">
    <molecule id="Q3U0P1-2"/>
    <property type="organism name" value="mouse"/>
</dbReference>
<dbReference type="UCSC" id="uc012fth.2">
    <molecule id="Q3U0P1-3"/>
    <property type="organism name" value="mouse"/>
</dbReference>
<dbReference type="AGR" id="MGI:3040695"/>
<dbReference type="CTD" id="79728"/>
<dbReference type="MGI" id="MGI:3040695">
    <property type="gene designation" value="Palb2"/>
</dbReference>
<dbReference type="VEuPathDB" id="HostDB:ENSMUSG00000044702"/>
<dbReference type="eggNOG" id="ENOG502QRAP">
    <property type="taxonomic scope" value="Eukaryota"/>
</dbReference>
<dbReference type="GeneTree" id="ENSGT00390000014423"/>
<dbReference type="HOGENOM" id="CLU_008217_1_0_1"/>
<dbReference type="InParanoid" id="Q3U0P1"/>
<dbReference type="OMA" id="GHCQKED"/>
<dbReference type="OrthoDB" id="9936560at2759"/>
<dbReference type="PhylomeDB" id="Q3U0P1"/>
<dbReference type="TreeFam" id="TF351544"/>
<dbReference type="Reactome" id="R-MMU-5685942">
    <property type="pathway name" value="HDR through Homologous Recombination (HRR)"/>
</dbReference>
<dbReference type="Reactome" id="R-MMU-5693568">
    <property type="pathway name" value="Resolution of D-loop Structures through Holliday Junction Intermediates"/>
</dbReference>
<dbReference type="Reactome" id="R-MMU-5693579">
    <property type="pathway name" value="Homologous DNA Pairing and Strand Exchange"/>
</dbReference>
<dbReference type="BioGRID-ORCS" id="233826">
    <property type="hits" value="28 hits in 117 CRISPR screens"/>
</dbReference>
<dbReference type="ChiTaRS" id="Palb2">
    <property type="organism name" value="mouse"/>
</dbReference>
<dbReference type="PRO" id="PR:Q3U0P1"/>
<dbReference type="Proteomes" id="UP000000589">
    <property type="component" value="Chromosome 7"/>
</dbReference>
<dbReference type="RNAct" id="Q3U0P1">
    <property type="molecule type" value="protein"/>
</dbReference>
<dbReference type="Bgee" id="ENSMUSG00000044702">
    <property type="expression patterns" value="Expressed in animal zygote and 151 other cell types or tissues"/>
</dbReference>
<dbReference type="ExpressionAtlas" id="Q3U0P1">
    <property type="expression patterns" value="baseline and differential"/>
</dbReference>
<dbReference type="GO" id="GO:1990391">
    <property type="term" value="C:DNA repair complex"/>
    <property type="evidence" value="ECO:0007669"/>
    <property type="project" value="Ensembl"/>
</dbReference>
<dbReference type="GO" id="GO:0016607">
    <property type="term" value="C:nuclear speck"/>
    <property type="evidence" value="ECO:0007669"/>
    <property type="project" value="Ensembl"/>
</dbReference>
<dbReference type="GO" id="GO:0003677">
    <property type="term" value="F:DNA binding"/>
    <property type="evidence" value="ECO:0000250"/>
    <property type="project" value="UniProtKB"/>
</dbReference>
<dbReference type="GO" id="GO:0009887">
    <property type="term" value="P:animal organ morphogenesis"/>
    <property type="evidence" value="ECO:0000315"/>
    <property type="project" value="MGI"/>
</dbReference>
<dbReference type="GO" id="GO:0006915">
    <property type="term" value="P:apoptotic process"/>
    <property type="evidence" value="ECO:0000315"/>
    <property type="project" value="MGI"/>
</dbReference>
<dbReference type="GO" id="GO:0000724">
    <property type="term" value="P:double-strand break repair via homologous recombination"/>
    <property type="evidence" value="ECO:0000250"/>
    <property type="project" value="UniProtKB"/>
</dbReference>
<dbReference type="GO" id="GO:0048568">
    <property type="term" value="P:embryonic organ development"/>
    <property type="evidence" value="ECO:0000315"/>
    <property type="project" value="MGI"/>
</dbReference>
<dbReference type="GO" id="GO:0001701">
    <property type="term" value="P:in utero embryonic development"/>
    <property type="evidence" value="ECO:0000315"/>
    <property type="project" value="MGI"/>
</dbReference>
<dbReference type="GO" id="GO:0001833">
    <property type="term" value="P:inner cell mass cell proliferation"/>
    <property type="evidence" value="ECO:0000315"/>
    <property type="project" value="MGI"/>
</dbReference>
<dbReference type="GO" id="GO:0007498">
    <property type="term" value="P:mesoderm development"/>
    <property type="evidence" value="ECO:0000315"/>
    <property type="project" value="MGI"/>
</dbReference>
<dbReference type="GO" id="GO:0035264">
    <property type="term" value="P:multicellular organism growth"/>
    <property type="evidence" value="ECO:0000315"/>
    <property type="project" value="MGI"/>
</dbReference>
<dbReference type="GO" id="GO:0043066">
    <property type="term" value="P:negative regulation of apoptotic process"/>
    <property type="evidence" value="ECO:0000315"/>
    <property type="project" value="MGI"/>
</dbReference>
<dbReference type="GO" id="GO:0036342">
    <property type="term" value="P:post-anal tail morphogenesis"/>
    <property type="evidence" value="ECO:0000315"/>
    <property type="project" value="MGI"/>
</dbReference>
<dbReference type="GO" id="GO:0001756">
    <property type="term" value="P:somitogenesis"/>
    <property type="evidence" value="ECO:0000315"/>
    <property type="project" value="MGI"/>
</dbReference>
<dbReference type="Gene3D" id="2.130.10.10">
    <property type="entry name" value="YVTN repeat-like/Quinoprotein amine dehydrogenase"/>
    <property type="match status" value="1"/>
</dbReference>
<dbReference type="InterPro" id="IPR042417">
    <property type="entry name" value="PALB2"/>
</dbReference>
<dbReference type="InterPro" id="IPR031920">
    <property type="entry name" value="PALB2_WD40"/>
</dbReference>
<dbReference type="InterPro" id="IPR015943">
    <property type="entry name" value="WD40/YVTN_repeat-like_dom_sf"/>
</dbReference>
<dbReference type="InterPro" id="IPR036322">
    <property type="entry name" value="WD40_repeat_dom_sf"/>
</dbReference>
<dbReference type="PANTHER" id="PTHR14662">
    <property type="entry name" value="PARTNER AND LOCALIZER OF BRCA2"/>
    <property type="match status" value="1"/>
</dbReference>
<dbReference type="PANTHER" id="PTHR14662:SF2">
    <property type="entry name" value="PARTNER AND LOCALIZER OF BRCA2"/>
    <property type="match status" value="1"/>
</dbReference>
<dbReference type="Pfam" id="PF16756">
    <property type="entry name" value="PALB2_WD40"/>
    <property type="match status" value="1"/>
</dbReference>
<dbReference type="SUPFAM" id="SSF50978">
    <property type="entry name" value="WD40 repeat-like"/>
    <property type="match status" value="1"/>
</dbReference>
<gene>
    <name type="primary">Palb2</name>
</gene>
<name>PALB2_MOUSE</name>
<evidence type="ECO:0000250" key="1"/>
<evidence type="ECO:0000250" key="2">
    <source>
        <dbReference type="UniProtKB" id="Q86YC2"/>
    </source>
</evidence>
<evidence type="ECO:0000255" key="3"/>
<evidence type="ECO:0000256" key="4">
    <source>
        <dbReference type="SAM" id="MobiDB-lite"/>
    </source>
</evidence>
<evidence type="ECO:0000303" key="5">
    <source>
    </source>
</evidence>
<evidence type="ECO:0000303" key="6">
    <source>
    </source>
</evidence>
<evidence type="ECO:0007829" key="7">
    <source>
        <dbReference type="PDB" id="6E4H"/>
    </source>
</evidence>
<sequence>MEELSGKPLSYAEKEKLKEKLAFLKKEYSRTLARLQRAKRAEKAKNSKKAIEDGVPQPEASSQLSHSESINKGFPCDTLQSNHLDEETGENISQILDVEPQSFNCKQGKEVLHTPRAGDIQGQLLHSTSSPDGKKEQNTLPGTTKTPWEKSSVSQEKEDYFDTNSLALLGKHRKGQESISRKNSRTPVSEKTHLLSLRSQIPDPPALVTGIGEGILIPPSGKSERGIDTLVRGNTVSAEAAVPSCTASNSNHSQHLEHTPPKSGCKITTQGPASSTNLVAQDQKMTIFTVNSVVYKAVRAHGQLPGSPNSCSVNDLTHSNLPANSTPNSKSLKSPSNTVDERNEPLQEDEILGPSKNFNLAAVSPPSTESQIHSCTMLEGLLFPAEYYVRTTRRMSDCQRKIALEAVIQSHLGVKKKELKKKTKATKAVVLSSEDTDQSESGMLDTSTGQSSSGSLSQKLLSPAEVSSPPGPAGKATTPPPGRGHRGKRKSARTSTLGHCQLLFPPCAALAVNRSKGKFTKHKCQNRGVVIHDFELPDEDFGLLKLEKLKSCSEKLIESPDSKNCGERLPREGNHAALEELQRDSETEGLEEELTVPPGEAYRPGPTLRRQPGSKDLSSSIVLFTPADTAAPNDSGRPPPSLCSPAFPILGMTPALGSQAAGETLSTEAAQPCSTSQPPLLGDTNSLVNNSKQCNSSACSPKPDTNLQASGRQGQPACDSDSGPQATPLPVESFTFRENQLCGNACLELHEHSTEQTETADRPACDNLNPGNLQLVSELKNPSSSCSVDVSAMWWERAGAKEPCIVTACEDVVSLWKPLNSLQWEKVHTWHFTEVPVLQIVPVPDVYNLICVALGSLEIREIRALLCSSGDDSEKQVLLKSGDIKAMLGLTKRRLVSSTGTFCNQQIQIMTFADDGSSKDEQLLMPPDETVLTFAEVQGTQEALLGTTTVNSIVIWNLKTGQLLKKMHIDDSYQASVCHGAYSEKGLLFVVVSQPCAKESQALGSPVFQLLVINPKTAQSVGVLLCSLPQGQAGRFLEGDVKDHVAAAVLTSGTIAIWDLLLGHCTALLPPVSDQSWSLVKWSGTDSHLLAGQKDGNIFIYRYF</sequence>
<organism>
    <name type="scientific">Mus musculus</name>
    <name type="common">Mouse</name>
    <dbReference type="NCBI Taxonomy" id="10090"/>
    <lineage>
        <taxon>Eukaryota</taxon>
        <taxon>Metazoa</taxon>
        <taxon>Chordata</taxon>
        <taxon>Craniata</taxon>
        <taxon>Vertebrata</taxon>
        <taxon>Euteleostomi</taxon>
        <taxon>Mammalia</taxon>
        <taxon>Eutheria</taxon>
        <taxon>Euarchontoglires</taxon>
        <taxon>Glires</taxon>
        <taxon>Rodentia</taxon>
        <taxon>Myomorpha</taxon>
        <taxon>Muroidea</taxon>
        <taxon>Muridae</taxon>
        <taxon>Murinae</taxon>
        <taxon>Mus</taxon>
        <taxon>Mus</taxon>
    </lineage>
</organism>
<reference key="1">
    <citation type="journal article" date="2005" name="Science">
        <title>The transcriptional landscape of the mammalian genome.</title>
        <authorList>
            <person name="Carninci P."/>
            <person name="Kasukawa T."/>
            <person name="Katayama S."/>
            <person name="Gough J."/>
            <person name="Frith M.C."/>
            <person name="Maeda N."/>
            <person name="Oyama R."/>
            <person name="Ravasi T."/>
            <person name="Lenhard B."/>
            <person name="Wells C."/>
            <person name="Kodzius R."/>
            <person name="Shimokawa K."/>
            <person name="Bajic V.B."/>
            <person name="Brenner S.E."/>
            <person name="Batalov S."/>
            <person name="Forrest A.R."/>
            <person name="Zavolan M."/>
            <person name="Davis M.J."/>
            <person name="Wilming L.G."/>
            <person name="Aidinis V."/>
            <person name="Allen J.E."/>
            <person name="Ambesi-Impiombato A."/>
            <person name="Apweiler R."/>
            <person name="Aturaliya R.N."/>
            <person name="Bailey T.L."/>
            <person name="Bansal M."/>
            <person name="Baxter L."/>
            <person name="Beisel K.W."/>
            <person name="Bersano T."/>
            <person name="Bono H."/>
            <person name="Chalk A.M."/>
            <person name="Chiu K.P."/>
            <person name="Choudhary V."/>
            <person name="Christoffels A."/>
            <person name="Clutterbuck D.R."/>
            <person name="Crowe M.L."/>
            <person name="Dalla E."/>
            <person name="Dalrymple B.P."/>
            <person name="de Bono B."/>
            <person name="Della Gatta G."/>
            <person name="di Bernardo D."/>
            <person name="Down T."/>
            <person name="Engstrom P."/>
            <person name="Fagiolini M."/>
            <person name="Faulkner G."/>
            <person name="Fletcher C.F."/>
            <person name="Fukushima T."/>
            <person name="Furuno M."/>
            <person name="Futaki S."/>
            <person name="Gariboldi M."/>
            <person name="Georgii-Hemming P."/>
            <person name="Gingeras T.R."/>
            <person name="Gojobori T."/>
            <person name="Green R.E."/>
            <person name="Gustincich S."/>
            <person name="Harbers M."/>
            <person name="Hayashi Y."/>
            <person name="Hensch T.K."/>
            <person name="Hirokawa N."/>
            <person name="Hill D."/>
            <person name="Huminiecki L."/>
            <person name="Iacono M."/>
            <person name="Ikeo K."/>
            <person name="Iwama A."/>
            <person name="Ishikawa T."/>
            <person name="Jakt M."/>
            <person name="Kanapin A."/>
            <person name="Katoh M."/>
            <person name="Kawasawa Y."/>
            <person name="Kelso J."/>
            <person name="Kitamura H."/>
            <person name="Kitano H."/>
            <person name="Kollias G."/>
            <person name="Krishnan S.P."/>
            <person name="Kruger A."/>
            <person name="Kummerfeld S.K."/>
            <person name="Kurochkin I.V."/>
            <person name="Lareau L.F."/>
            <person name="Lazarevic D."/>
            <person name="Lipovich L."/>
            <person name="Liu J."/>
            <person name="Liuni S."/>
            <person name="McWilliam S."/>
            <person name="Madan Babu M."/>
            <person name="Madera M."/>
            <person name="Marchionni L."/>
            <person name="Matsuda H."/>
            <person name="Matsuzawa S."/>
            <person name="Miki H."/>
            <person name="Mignone F."/>
            <person name="Miyake S."/>
            <person name="Morris K."/>
            <person name="Mottagui-Tabar S."/>
            <person name="Mulder N."/>
            <person name="Nakano N."/>
            <person name="Nakauchi H."/>
            <person name="Ng P."/>
            <person name="Nilsson R."/>
            <person name="Nishiguchi S."/>
            <person name="Nishikawa S."/>
            <person name="Nori F."/>
            <person name="Ohara O."/>
            <person name="Okazaki Y."/>
            <person name="Orlando V."/>
            <person name="Pang K.C."/>
            <person name="Pavan W.J."/>
            <person name="Pavesi G."/>
            <person name="Pesole G."/>
            <person name="Petrovsky N."/>
            <person name="Piazza S."/>
            <person name="Reed J."/>
            <person name="Reid J.F."/>
            <person name="Ring B.Z."/>
            <person name="Ringwald M."/>
            <person name="Rost B."/>
            <person name="Ruan Y."/>
            <person name="Salzberg S.L."/>
            <person name="Sandelin A."/>
            <person name="Schneider C."/>
            <person name="Schoenbach C."/>
            <person name="Sekiguchi K."/>
            <person name="Semple C.A."/>
            <person name="Seno S."/>
            <person name="Sessa L."/>
            <person name="Sheng Y."/>
            <person name="Shibata Y."/>
            <person name="Shimada H."/>
            <person name="Shimada K."/>
            <person name="Silva D."/>
            <person name="Sinclair B."/>
            <person name="Sperling S."/>
            <person name="Stupka E."/>
            <person name="Sugiura K."/>
            <person name="Sultana R."/>
            <person name="Takenaka Y."/>
            <person name="Taki K."/>
            <person name="Tammoja K."/>
            <person name="Tan S.L."/>
            <person name="Tang S."/>
            <person name="Taylor M.S."/>
            <person name="Tegner J."/>
            <person name="Teichmann S.A."/>
            <person name="Ueda H.R."/>
            <person name="van Nimwegen E."/>
            <person name="Verardo R."/>
            <person name="Wei C.L."/>
            <person name="Yagi K."/>
            <person name="Yamanishi H."/>
            <person name="Zabarovsky E."/>
            <person name="Zhu S."/>
            <person name="Zimmer A."/>
            <person name="Hide W."/>
            <person name="Bult C."/>
            <person name="Grimmond S.M."/>
            <person name="Teasdale R.D."/>
            <person name="Liu E.T."/>
            <person name="Brusic V."/>
            <person name="Quackenbush J."/>
            <person name="Wahlestedt C."/>
            <person name="Mattick J.S."/>
            <person name="Hume D.A."/>
            <person name="Kai C."/>
            <person name="Sasaki D."/>
            <person name="Tomaru Y."/>
            <person name="Fukuda S."/>
            <person name="Kanamori-Katayama M."/>
            <person name="Suzuki M."/>
            <person name="Aoki J."/>
            <person name="Arakawa T."/>
            <person name="Iida J."/>
            <person name="Imamura K."/>
            <person name="Itoh M."/>
            <person name="Kato T."/>
            <person name="Kawaji H."/>
            <person name="Kawagashira N."/>
            <person name="Kawashima T."/>
            <person name="Kojima M."/>
            <person name="Kondo S."/>
            <person name="Konno H."/>
            <person name="Nakano K."/>
            <person name="Ninomiya N."/>
            <person name="Nishio T."/>
            <person name="Okada M."/>
            <person name="Plessy C."/>
            <person name="Shibata K."/>
            <person name="Shiraki T."/>
            <person name="Suzuki S."/>
            <person name="Tagami M."/>
            <person name="Waki K."/>
            <person name="Watahiki A."/>
            <person name="Okamura-Oho Y."/>
            <person name="Suzuki H."/>
            <person name="Kawai J."/>
            <person name="Hayashizaki Y."/>
        </authorList>
    </citation>
    <scope>NUCLEOTIDE SEQUENCE [LARGE SCALE MRNA] (ISOFORM 4)</scope>
    <scope>NUCLEOTIDE SEQUENCE [LARGE SCALE MRNA] OF 1-1086 (ISOFORM 1)</scope>
    <source>
        <strain>C57BL/6J</strain>
        <strain>NOD</strain>
        <tissue>Skin</tissue>
        <tissue>Spleen</tissue>
    </source>
</reference>
<reference key="2">
    <citation type="journal article" date="2004" name="Genome Res.">
        <title>The status, quality, and expansion of the NIH full-length cDNA project: the Mammalian Gene Collection (MGC).</title>
        <authorList>
            <consortium name="The MGC Project Team"/>
        </authorList>
    </citation>
    <scope>NUCLEOTIDE SEQUENCE [LARGE SCALE MRNA] (ISOFORMS 2 AND 3)</scope>
    <source>
        <strain>C57BL/6J</strain>
        <strain>FVB/N-3</strain>
        <tissue>Embryonic germ cell</tissue>
        <tissue>Mammary tumor</tissue>
    </source>
</reference>
<protein>
    <recommendedName>
        <fullName>Partner and localizer of BRCA2</fullName>
    </recommendedName>
</protein>
<comment type="function">
    <text evidence="1">Plays a critical role in homologous recombination repair (HRR) through its ability to recruit BRCA2 and RAD51 to DNA breaks. Strongly stimulates the DNA strand-invasion activity of RAD51, stabilizes the nucleoprotein filament against a disruptive BRC3-BRC4 polypeptide and helps RAD51 to overcome the suppressive effect of replication protein A (RPA). Functionally cooperates with RAD51AP1 in promoting of D-loop formation by RAD51. Serves as the molecular scaffold in the formation of the BRCA1-PALB2-BRCA2 complex which is essential for homologous recombination. Via its WD repeats is proposed to scaffold a HR complex containing RAD51C and BRCA2 which is thought to play a role in HR-mediated DNA repair. Essential partner of BRCA2 that promotes the localization and stability of BRCA2. Also enables its recombinational repair and checkpoint functions of BRCA2. May act by promoting stable association of BRCA2 with nuclear structures, allowing BRCA2 to escape the effects of proteasome-mediated degradation. Binds DNA with high affinity for D loop, which comprises single-stranded, double-stranded and branched DNA structures. May play a role in the extension step after strand invasion at replication-dependent DNA double-strand breaks; together with BRCA2 is involved in both POLH localization at collapsed replication forks and DNA polymerization activity (By similarity).</text>
</comment>
<comment type="subunit">
    <text evidence="1 2">Homooligomer; dissociated upon DNA damage thus allowing association with BRCA1. Oligomerization is essential for its focal accumulation at DNA breaks. Part of a BRCA complex containing BRCA1, BRCA2 and PALB2. Interacts with BRCA1 and this interaction is essential for its function in HRR. Interacts with RAD51AP1 and MORF4L1/MRG15. Component of the homologous recombination repair (HR) complex composed of ERCC5/XPG, BRCA2, PALB2, DSS1 and RAD51 (By similarity). Within the complex, interacts with ERCC5/XPG and BRCA2 (By similarity). Interacts with BRCA2, RAD51C, RAD51 and XRCC3; the interactions are direct and it may serve as a scaffold for a HR complex containing PALB2, BRCA2, RAD51C, RAD51 and XRCC3. Interacts with POLH; the interaction is direct (By similarity).</text>
</comment>
<comment type="subcellular location">
    <subcellularLocation>
        <location evidence="2">Nucleus</location>
    </subcellularLocation>
    <text evidence="2">Colocalizes with BRCA2 in nuclear foci.</text>
</comment>
<comment type="alternative products">
    <event type="alternative splicing"/>
    <isoform>
        <id>Q3U0P1-1</id>
        <name>1</name>
        <sequence type="displayed"/>
    </isoform>
    <isoform>
        <id>Q3U0P1-2</id>
        <name>2</name>
        <sequence type="described" ref="VSP_020929"/>
    </isoform>
    <isoform>
        <id>Q3U0P1-3</id>
        <name>3</name>
        <sequence type="described" ref="VSP_020928"/>
    </isoform>
    <isoform>
        <id>Q3U0P1-4</id>
        <name>4</name>
        <sequence type="described" ref="VSP_020930 VSP_020931"/>
    </isoform>
</comment>
<comment type="domain">
    <text evidence="1">Interaction with BRCA2 occurs through a hydrophobic pocket at the crossover between WD repeats 4 and 5.</text>
</comment>
<comment type="domain">
    <text>The coiled coil domain mediates self-association.</text>
</comment>
<comment type="domain">
    <text>The chromatin-association motif (ChAM) mediates association with chromatin, probably through nucleosome core particles, independently from binding to D loop, ssDNA or dsDNA structures.</text>
</comment>
<feature type="chain" id="PRO_0000252392" description="Partner and localizer of BRCA2">
    <location>
        <begin position="1"/>
        <end position="1104"/>
    </location>
</feature>
<feature type="repeat" description="WD 1">
    <location>
        <begin position="772"/>
        <end position="833"/>
    </location>
</feature>
<feature type="repeat" description="WD 2">
    <location>
        <begin position="835"/>
        <end position="879"/>
    </location>
</feature>
<feature type="repeat" description="WD 3">
    <location>
        <begin position="880"/>
        <end position="927"/>
    </location>
</feature>
<feature type="repeat" description="WD 4">
    <location>
        <begin position="928"/>
        <end position="970"/>
    </location>
</feature>
<feature type="repeat" description="WD 5">
    <location>
        <begin position="976"/>
        <end position="1027"/>
    </location>
</feature>
<feature type="repeat" description="WD 6">
    <location>
        <begin position="1033"/>
        <end position="1071"/>
    </location>
</feature>
<feature type="repeat" description="WD 7">
    <location>
        <begin position="1073"/>
        <end position="1104"/>
    </location>
</feature>
<feature type="region of interest" description="Interaction with BRCA1" evidence="1">
    <location>
        <begin position="1"/>
        <end position="308"/>
    </location>
</feature>
<feature type="region of interest" description="Interaction with RAD51" evidence="1">
    <location>
        <begin position="1"/>
        <end position="195"/>
    </location>
</feature>
<feature type="region of interest" description="Required for its oligomerization and is important for its focal concentration at DNA damage sites" evidence="1">
    <location>
        <begin position="1"/>
        <end position="157"/>
    </location>
</feature>
<feature type="region of interest" description="Disordered" evidence="4">
    <location>
        <begin position="39"/>
        <end position="91"/>
    </location>
</feature>
<feature type="region of interest" description="Disordered" evidence="4">
    <location>
        <begin position="122"/>
        <end position="157"/>
    </location>
</feature>
<feature type="region of interest" description="Disordered" evidence="4">
    <location>
        <begin position="243"/>
        <end position="272"/>
    </location>
</feature>
<feature type="region of interest" description="Disordered" evidence="4">
    <location>
        <begin position="304"/>
        <end position="354"/>
    </location>
</feature>
<feature type="region of interest" description="ChAM (Chromatin-association motif); required for chromatin association, mediates nucleosome association" evidence="1">
    <location>
        <begin position="374"/>
        <end position="424"/>
    </location>
</feature>
<feature type="region of interest" description="Disordered" evidence="4">
    <location>
        <begin position="417"/>
        <end position="494"/>
    </location>
</feature>
<feature type="region of interest" description="Disordered" evidence="4">
    <location>
        <begin position="581"/>
        <end position="730"/>
    </location>
</feature>
<feature type="region of interest" description="Required for interaction with POLH and POLH DNA synthesis stimulation" evidence="1">
    <location>
        <begin position="693"/>
        <end position="1104"/>
    </location>
</feature>
<feature type="region of interest" description="Interaction with RAD51 and BRCA2" evidence="1">
    <location>
        <begin position="771"/>
        <end position="1104"/>
    </location>
</feature>
<feature type="region of interest" description="Interaction with RAD51, BRCA2 and POLH" evidence="1">
    <location>
        <begin position="771"/>
        <end position="1104"/>
    </location>
</feature>
<feature type="coiled-coil region" evidence="3">
    <location>
        <begin position="9"/>
        <end position="48"/>
    </location>
</feature>
<feature type="compositionally biased region" description="Basic and acidic residues" evidence="4">
    <location>
        <begin position="39"/>
        <end position="52"/>
    </location>
</feature>
<feature type="compositionally biased region" description="Polar residues" evidence="4">
    <location>
        <begin position="59"/>
        <end position="70"/>
    </location>
</feature>
<feature type="compositionally biased region" description="Polar residues" evidence="4">
    <location>
        <begin position="138"/>
        <end position="154"/>
    </location>
</feature>
<feature type="compositionally biased region" description="Polar residues" evidence="4">
    <location>
        <begin position="306"/>
        <end position="338"/>
    </location>
</feature>
<feature type="compositionally biased region" description="Low complexity" evidence="4">
    <location>
        <begin position="446"/>
        <end position="462"/>
    </location>
</feature>
<feature type="compositionally biased region" description="Basic residues" evidence="4">
    <location>
        <begin position="483"/>
        <end position="492"/>
    </location>
</feature>
<feature type="compositionally biased region" description="Polar residues" evidence="4">
    <location>
        <begin position="664"/>
        <end position="713"/>
    </location>
</feature>
<feature type="modified residue" description="Phosphoserine" evidence="2">
    <location>
        <position position="274"/>
    </location>
</feature>
<feature type="modified residue" description="Phosphoserine" evidence="2">
    <location>
        <position position="364"/>
    </location>
</feature>
<feature type="modified residue" description="Phosphoserine" evidence="2">
    <location>
        <position position="432"/>
    </location>
</feature>
<feature type="splice variant" id="VSP_020928" description="In isoform 3." evidence="5">
    <location>
        <begin position="36"/>
        <end position="755"/>
    </location>
</feature>
<feature type="splice variant" id="VSP_020929" description="In isoform 2." evidence="5">
    <location>
        <begin position="170"/>
        <end position="532"/>
    </location>
</feature>
<feature type="splice variant" id="VSP_020930" description="In isoform 4." evidence="6">
    <original>DFELPDEDFGLL</original>
    <variation>GKSRRRVRLRLM</variation>
    <location>
        <begin position="533"/>
        <end position="544"/>
    </location>
</feature>
<feature type="splice variant" id="VSP_020931" description="In isoform 4." evidence="6">
    <location>
        <begin position="545"/>
        <end position="1104"/>
    </location>
</feature>
<feature type="helix" evidence="7">
    <location>
        <begin position="11"/>
        <end position="39"/>
    </location>
</feature>
<proteinExistence type="evidence at protein level"/>